<proteinExistence type="evidence at protein level"/>
<feature type="chain" id="PRO_0000047639" description="Zinc finger protein 527">
    <location>
        <begin position="1"/>
        <end position="609"/>
    </location>
</feature>
<feature type="domain" description="KRAB" evidence="2">
    <location>
        <begin position="14"/>
        <end position="123"/>
    </location>
</feature>
<feature type="zinc finger region" description="C2H2-type 1; degenerate" evidence="1">
    <location>
        <begin position="274"/>
        <end position="296"/>
    </location>
</feature>
<feature type="zinc finger region" description="C2H2-type 2" evidence="1">
    <location>
        <begin position="302"/>
        <end position="324"/>
    </location>
</feature>
<feature type="zinc finger region" description="C2H2-type 3" evidence="1">
    <location>
        <begin position="330"/>
        <end position="352"/>
    </location>
</feature>
<feature type="zinc finger region" description="C2H2-type 4" evidence="1">
    <location>
        <begin position="358"/>
        <end position="380"/>
    </location>
</feature>
<feature type="zinc finger region" description="C2H2-type 5" evidence="1">
    <location>
        <begin position="386"/>
        <end position="408"/>
    </location>
</feature>
<feature type="zinc finger region" description="C2H2-type 6" evidence="1">
    <location>
        <begin position="414"/>
        <end position="436"/>
    </location>
</feature>
<feature type="zinc finger region" description="C2H2-type 7" evidence="1">
    <location>
        <begin position="442"/>
        <end position="464"/>
    </location>
</feature>
<feature type="zinc finger region" description="C2H2-type 8" evidence="1">
    <location>
        <begin position="470"/>
        <end position="492"/>
    </location>
</feature>
<feature type="zinc finger region" description="C2H2-type 9" evidence="1">
    <location>
        <begin position="498"/>
        <end position="520"/>
    </location>
</feature>
<feature type="zinc finger region" description="C2H2-type 10" evidence="1">
    <location>
        <begin position="526"/>
        <end position="548"/>
    </location>
</feature>
<feature type="zinc finger region" description="C2H2-type 11" evidence="1">
    <location>
        <begin position="554"/>
        <end position="576"/>
    </location>
</feature>
<feature type="zinc finger region" description="C2H2-type 12" evidence="1">
    <location>
        <begin position="582"/>
        <end position="604"/>
    </location>
</feature>
<feature type="splice variant" id="VSP_040341" description="In isoform 2." evidence="3">
    <location>
        <begin position="54"/>
        <end position="85"/>
    </location>
</feature>
<feature type="sequence conflict" description="In Ref. 1; BAC03701/BAG62727." evidence="4" ref="1">
    <original>I</original>
    <variation>V</variation>
    <location>
        <position position="57"/>
    </location>
</feature>
<feature type="sequence conflict" description="In Ref. 1; BAG62727." evidence="4" ref="1">
    <original>S</original>
    <variation>P</variation>
    <location>
        <position position="287"/>
    </location>
</feature>
<reference key="1">
    <citation type="journal article" date="2004" name="Nat. Genet.">
        <title>Complete sequencing and characterization of 21,243 full-length human cDNAs.</title>
        <authorList>
            <person name="Ota T."/>
            <person name="Suzuki Y."/>
            <person name="Nishikawa T."/>
            <person name="Otsuki T."/>
            <person name="Sugiyama T."/>
            <person name="Irie R."/>
            <person name="Wakamatsu A."/>
            <person name="Hayashi K."/>
            <person name="Sato H."/>
            <person name="Nagai K."/>
            <person name="Kimura K."/>
            <person name="Makita H."/>
            <person name="Sekine M."/>
            <person name="Obayashi M."/>
            <person name="Nishi T."/>
            <person name="Shibahara T."/>
            <person name="Tanaka T."/>
            <person name="Ishii S."/>
            <person name="Yamamoto J."/>
            <person name="Saito K."/>
            <person name="Kawai Y."/>
            <person name="Isono Y."/>
            <person name="Nakamura Y."/>
            <person name="Nagahari K."/>
            <person name="Murakami K."/>
            <person name="Yasuda T."/>
            <person name="Iwayanagi T."/>
            <person name="Wagatsuma M."/>
            <person name="Shiratori A."/>
            <person name="Sudo H."/>
            <person name="Hosoiri T."/>
            <person name="Kaku Y."/>
            <person name="Kodaira H."/>
            <person name="Kondo H."/>
            <person name="Sugawara M."/>
            <person name="Takahashi M."/>
            <person name="Kanda K."/>
            <person name="Yokoi T."/>
            <person name="Furuya T."/>
            <person name="Kikkawa E."/>
            <person name="Omura Y."/>
            <person name="Abe K."/>
            <person name="Kamihara K."/>
            <person name="Katsuta N."/>
            <person name="Sato K."/>
            <person name="Tanikawa M."/>
            <person name="Yamazaki M."/>
            <person name="Ninomiya K."/>
            <person name="Ishibashi T."/>
            <person name="Yamashita H."/>
            <person name="Murakawa K."/>
            <person name="Fujimori K."/>
            <person name="Tanai H."/>
            <person name="Kimata M."/>
            <person name="Watanabe M."/>
            <person name="Hiraoka S."/>
            <person name="Chiba Y."/>
            <person name="Ishida S."/>
            <person name="Ono Y."/>
            <person name="Takiguchi S."/>
            <person name="Watanabe S."/>
            <person name="Yosida M."/>
            <person name="Hotuta T."/>
            <person name="Kusano J."/>
            <person name="Kanehori K."/>
            <person name="Takahashi-Fujii A."/>
            <person name="Hara H."/>
            <person name="Tanase T.-O."/>
            <person name="Nomura Y."/>
            <person name="Togiya S."/>
            <person name="Komai F."/>
            <person name="Hara R."/>
            <person name="Takeuchi K."/>
            <person name="Arita M."/>
            <person name="Imose N."/>
            <person name="Musashino K."/>
            <person name="Yuuki H."/>
            <person name="Oshima A."/>
            <person name="Sasaki N."/>
            <person name="Aotsuka S."/>
            <person name="Yoshikawa Y."/>
            <person name="Matsunawa H."/>
            <person name="Ichihara T."/>
            <person name="Shiohata N."/>
            <person name="Sano S."/>
            <person name="Moriya S."/>
            <person name="Momiyama H."/>
            <person name="Satoh N."/>
            <person name="Takami S."/>
            <person name="Terashima Y."/>
            <person name="Suzuki O."/>
            <person name="Nakagawa S."/>
            <person name="Senoh A."/>
            <person name="Mizoguchi H."/>
            <person name="Goto Y."/>
            <person name="Shimizu F."/>
            <person name="Wakebe H."/>
            <person name="Hishigaki H."/>
            <person name="Watanabe T."/>
            <person name="Sugiyama A."/>
            <person name="Takemoto M."/>
            <person name="Kawakami B."/>
            <person name="Yamazaki M."/>
            <person name="Watanabe K."/>
            <person name="Kumagai A."/>
            <person name="Itakura S."/>
            <person name="Fukuzumi Y."/>
            <person name="Fujimori Y."/>
            <person name="Komiyama M."/>
            <person name="Tashiro H."/>
            <person name="Tanigami A."/>
            <person name="Fujiwara T."/>
            <person name="Ono T."/>
            <person name="Yamada K."/>
            <person name="Fujii Y."/>
            <person name="Ozaki K."/>
            <person name="Hirao M."/>
            <person name="Ohmori Y."/>
            <person name="Kawabata A."/>
            <person name="Hikiji T."/>
            <person name="Kobatake N."/>
            <person name="Inagaki H."/>
            <person name="Ikema Y."/>
            <person name="Okamoto S."/>
            <person name="Okitani R."/>
            <person name="Kawakami T."/>
            <person name="Noguchi S."/>
            <person name="Itoh T."/>
            <person name="Shigeta K."/>
            <person name="Senba T."/>
            <person name="Matsumura K."/>
            <person name="Nakajima Y."/>
            <person name="Mizuno T."/>
            <person name="Morinaga M."/>
            <person name="Sasaki M."/>
            <person name="Togashi T."/>
            <person name="Oyama M."/>
            <person name="Hata H."/>
            <person name="Watanabe M."/>
            <person name="Komatsu T."/>
            <person name="Mizushima-Sugano J."/>
            <person name="Satoh T."/>
            <person name="Shirai Y."/>
            <person name="Takahashi Y."/>
            <person name="Nakagawa K."/>
            <person name="Okumura K."/>
            <person name="Nagase T."/>
            <person name="Nomura N."/>
            <person name="Kikuchi H."/>
            <person name="Masuho Y."/>
            <person name="Yamashita R."/>
            <person name="Nakai K."/>
            <person name="Yada T."/>
            <person name="Nakamura Y."/>
            <person name="Ohara O."/>
            <person name="Isogai T."/>
            <person name="Sugano S."/>
        </authorList>
    </citation>
    <scope>NUCLEOTIDE SEQUENCE [LARGE SCALE MRNA] (ISOFORMS 1 AND 2)</scope>
    <source>
        <tissue>Brain</tissue>
        <tissue>Spleen</tissue>
    </source>
</reference>
<reference key="2">
    <citation type="journal article" date="2004" name="Nature">
        <title>The DNA sequence and biology of human chromosome 19.</title>
        <authorList>
            <person name="Grimwood J."/>
            <person name="Gordon L.A."/>
            <person name="Olsen A.S."/>
            <person name="Terry A."/>
            <person name="Schmutz J."/>
            <person name="Lamerdin J.E."/>
            <person name="Hellsten U."/>
            <person name="Goodstein D."/>
            <person name="Couronne O."/>
            <person name="Tran-Gyamfi M."/>
            <person name="Aerts A."/>
            <person name="Altherr M."/>
            <person name="Ashworth L."/>
            <person name="Bajorek E."/>
            <person name="Black S."/>
            <person name="Branscomb E."/>
            <person name="Caenepeel S."/>
            <person name="Carrano A.V."/>
            <person name="Caoile C."/>
            <person name="Chan Y.M."/>
            <person name="Christensen M."/>
            <person name="Cleland C.A."/>
            <person name="Copeland A."/>
            <person name="Dalin E."/>
            <person name="Dehal P."/>
            <person name="Denys M."/>
            <person name="Detter J.C."/>
            <person name="Escobar J."/>
            <person name="Flowers D."/>
            <person name="Fotopulos D."/>
            <person name="Garcia C."/>
            <person name="Georgescu A.M."/>
            <person name="Glavina T."/>
            <person name="Gomez M."/>
            <person name="Gonzales E."/>
            <person name="Groza M."/>
            <person name="Hammon N."/>
            <person name="Hawkins T."/>
            <person name="Haydu L."/>
            <person name="Ho I."/>
            <person name="Huang W."/>
            <person name="Israni S."/>
            <person name="Jett J."/>
            <person name="Kadner K."/>
            <person name="Kimball H."/>
            <person name="Kobayashi A."/>
            <person name="Larionov V."/>
            <person name="Leem S.-H."/>
            <person name="Lopez F."/>
            <person name="Lou Y."/>
            <person name="Lowry S."/>
            <person name="Malfatti S."/>
            <person name="Martinez D."/>
            <person name="McCready P.M."/>
            <person name="Medina C."/>
            <person name="Morgan J."/>
            <person name="Nelson K."/>
            <person name="Nolan M."/>
            <person name="Ovcharenko I."/>
            <person name="Pitluck S."/>
            <person name="Pollard M."/>
            <person name="Popkie A.P."/>
            <person name="Predki P."/>
            <person name="Quan G."/>
            <person name="Ramirez L."/>
            <person name="Rash S."/>
            <person name="Retterer J."/>
            <person name="Rodriguez A."/>
            <person name="Rogers S."/>
            <person name="Salamov A."/>
            <person name="Salazar A."/>
            <person name="She X."/>
            <person name="Smith D."/>
            <person name="Slezak T."/>
            <person name="Solovyev V."/>
            <person name="Thayer N."/>
            <person name="Tice H."/>
            <person name="Tsai M."/>
            <person name="Ustaszewska A."/>
            <person name="Vo N."/>
            <person name="Wagner M."/>
            <person name="Wheeler J."/>
            <person name="Wu K."/>
            <person name="Xie G."/>
            <person name="Yang J."/>
            <person name="Dubchak I."/>
            <person name="Furey T.S."/>
            <person name="DeJong P."/>
            <person name="Dickson M."/>
            <person name="Gordon D."/>
            <person name="Eichler E.E."/>
            <person name="Pennacchio L.A."/>
            <person name="Richardson P."/>
            <person name="Stubbs L."/>
            <person name="Rokhsar D.S."/>
            <person name="Myers R.M."/>
            <person name="Rubin E.M."/>
            <person name="Lucas S.M."/>
        </authorList>
    </citation>
    <scope>NUCLEOTIDE SEQUENCE [LARGE SCALE GENOMIC DNA]</scope>
</reference>
<sequence>MAVGLCKAMSQGLVTFRDVALDFSQEEWEWLKPSQKDLYRDVMLENYRNLVWLGLSISKPNMISLLEQGKEPWMVERKMSQGHCADWESWCEIEELSPKWFIDEDEISQEMVMERLASHGLECSSFREAWKYKGEFELHQGNAERHFMQVTAVKEISTGKRDNEFSNSGRSIPLKSVFLTQQKVPTIQQVHKFDIYDKLFPQNSVIIEYKRLHAEKESLIGNECEEFNQSTYLSKDIGIPPGEKPYESHDFSKLLSFHSLFTQHQTTHFGKLPHGYDECGDAFSCYSFFTQPQRIHSGEKPYACNDCGKAFSHDFFLSEHQRTHIGEKPYECKECNKAFRQSAHLAQHQRIHTGEKPFACNECGKAFSRYAFLVEHQRIHTGEKPYECKECNKAFRQSAHLNQHQRIHTGEKPYECNQCGKAFSRRIALTLHQRIHTGEKPFKCSECGKTFGYRSHLNQHQRIHTGEKPYECIKCGKFFRTDSQLNRHHRIHTGERPFECSKCGKAFSDALVLIHHKRSHAGEKPYECNKCGKAFSCGSYLNQHQRIHTGEKPYECSECGKAFHQILSLRLHQRIHAGEKPYKCNECGNNFSCVSALRRHQRIHNRETL</sequence>
<name>ZN527_HUMAN</name>
<comment type="function">
    <text>May be involved in transcriptional regulation.</text>
</comment>
<comment type="subcellular location">
    <subcellularLocation>
        <location evidence="4">Nucleus</location>
    </subcellularLocation>
</comment>
<comment type="alternative products">
    <event type="alternative splicing"/>
    <isoform>
        <id>Q8NB42-1</id>
        <name>1</name>
        <sequence type="displayed"/>
    </isoform>
    <isoform>
        <id>Q8NB42-2</id>
        <name>2</name>
        <sequence type="described" ref="VSP_040341"/>
    </isoform>
</comment>
<comment type="similarity">
    <text evidence="4">Belongs to the krueppel C2H2-type zinc-finger protein family.</text>
</comment>
<protein>
    <recommendedName>
        <fullName>Zinc finger protein 527</fullName>
    </recommendedName>
</protein>
<organism>
    <name type="scientific">Homo sapiens</name>
    <name type="common">Human</name>
    <dbReference type="NCBI Taxonomy" id="9606"/>
    <lineage>
        <taxon>Eukaryota</taxon>
        <taxon>Metazoa</taxon>
        <taxon>Chordata</taxon>
        <taxon>Craniata</taxon>
        <taxon>Vertebrata</taxon>
        <taxon>Euteleostomi</taxon>
        <taxon>Mammalia</taxon>
        <taxon>Eutheria</taxon>
        <taxon>Euarchontoglires</taxon>
        <taxon>Primates</taxon>
        <taxon>Haplorrhini</taxon>
        <taxon>Catarrhini</taxon>
        <taxon>Hominidae</taxon>
        <taxon>Homo</taxon>
    </lineage>
</organism>
<keyword id="KW-0025">Alternative splicing</keyword>
<keyword id="KW-0238">DNA-binding</keyword>
<keyword id="KW-0479">Metal-binding</keyword>
<keyword id="KW-0539">Nucleus</keyword>
<keyword id="KW-1267">Proteomics identification</keyword>
<keyword id="KW-1185">Reference proteome</keyword>
<keyword id="KW-0677">Repeat</keyword>
<keyword id="KW-0804">Transcription</keyword>
<keyword id="KW-0805">Transcription regulation</keyword>
<keyword id="KW-0862">Zinc</keyword>
<keyword id="KW-0863">Zinc-finger</keyword>
<evidence type="ECO:0000255" key="1">
    <source>
        <dbReference type="PROSITE-ProRule" id="PRU00042"/>
    </source>
</evidence>
<evidence type="ECO:0000255" key="2">
    <source>
        <dbReference type="PROSITE-ProRule" id="PRU00119"/>
    </source>
</evidence>
<evidence type="ECO:0000303" key="3">
    <source>
    </source>
</evidence>
<evidence type="ECO:0000305" key="4"/>
<dbReference type="EMBL" id="AK301135">
    <property type="protein sequence ID" value="BAG62727.1"/>
    <property type="molecule type" value="mRNA"/>
</dbReference>
<dbReference type="EMBL" id="AK091585">
    <property type="protein sequence ID" value="BAC03701.1"/>
    <property type="molecule type" value="mRNA"/>
</dbReference>
<dbReference type="EMBL" id="AC008806">
    <property type="status" value="NOT_ANNOTATED_CDS"/>
    <property type="molecule type" value="Genomic_DNA"/>
</dbReference>
<dbReference type="CCDS" id="CCDS42559.1">
    <molecule id="Q8NB42-1"/>
</dbReference>
<dbReference type="RefSeq" id="NP_115829.1">
    <molecule id="Q8NB42-1"/>
    <property type="nucleotide sequence ID" value="NM_032453.2"/>
</dbReference>
<dbReference type="RefSeq" id="XP_005259386.1">
    <molecule id="Q8NB42-2"/>
    <property type="nucleotide sequence ID" value="XM_005259329.5"/>
</dbReference>
<dbReference type="RefSeq" id="XP_054178334.1">
    <molecule id="Q8NB42-2"/>
    <property type="nucleotide sequence ID" value="XM_054322359.1"/>
</dbReference>
<dbReference type="SMR" id="Q8NB42"/>
<dbReference type="BioGRID" id="124104">
    <property type="interactions" value="2"/>
</dbReference>
<dbReference type="FunCoup" id="Q8NB42">
    <property type="interactions" value="173"/>
</dbReference>
<dbReference type="IntAct" id="Q8NB42">
    <property type="interactions" value="2"/>
</dbReference>
<dbReference type="STRING" id="9606.ENSP00000390179"/>
<dbReference type="iPTMnet" id="Q8NB42"/>
<dbReference type="PhosphoSitePlus" id="Q8NB42"/>
<dbReference type="BioMuta" id="ZNF527"/>
<dbReference type="DMDM" id="317373306"/>
<dbReference type="jPOST" id="Q8NB42"/>
<dbReference type="MassIVE" id="Q8NB42"/>
<dbReference type="PaxDb" id="9606-ENSP00000390179"/>
<dbReference type="PeptideAtlas" id="Q8NB42"/>
<dbReference type="ProteomicsDB" id="72728">
    <molecule id="Q8NB42-1"/>
</dbReference>
<dbReference type="ProteomicsDB" id="72729">
    <molecule id="Q8NB42-2"/>
</dbReference>
<dbReference type="Antibodypedia" id="29894">
    <property type="antibodies" value="39 antibodies from 13 providers"/>
</dbReference>
<dbReference type="DNASU" id="84503"/>
<dbReference type="Ensembl" id="ENST00000436120.7">
    <molecule id="Q8NB42-1"/>
    <property type="protein sequence ID" value="ENSP00000390179.2"/>
    <property type="gene ID" value="ENSG00000189164.15"/>
</dbReference>
<dbReference type="GeneID" id="84503"/>
<dbReference type="KEGG" id="hsa:84503"/>
<dbReference type="MANE-Select" id="ENST00000436120.7">
    <property type="protein sequence ID" value="ENSP00000390179.2"/>
    <property type="RefSeq nucleotide sequence ID" value="NM_032453.2"/>
    <property type="RefSeq protein sequence ID" value="NP_115829.1"/>
</dbReference>
<dbReference type="UCSC" id="uc010efk.2">
    <molecule id="Q8NB42-1"/>
    <property type="organism name" value="human"/>
</dbReference>
<dbReference type="AGR" id="HGNC:29385"/>
<dbReference type="CTD" id="84503"/>
<dbReference type="GeneCards" id="ZNF527"/>
<dbReference type="HGNC" id="HGNC:29385">
    <property type="gene designation" value="ZNF527"/>
</dbReference>
<dbReference type="HPA" id="ENSG00000189164">
    <property type="expression patterns" value="Low tissue specificity"/>
</dbReference>
<dbReference type="neXtProt" id="NX_Q8NB42"/>
<dbReference type="OpenTargets" id="ENSG00000189164"/>
<dbReference type="VEuPathDB" id="HostDB:ENSG00000189164"/>
<dbReference type="eggNOG" id="KOG1721">
    <property type="taxonomic scope" value="Eukaryota"/>
</dbReference>
<dbReference type="GeneTree" id="ENSGT00940000162987"/>
<dbReference type="HOGENOM" id="CLU_002678_44_5_1"/>
<dbReference type="InParanoid" id="Q8NB42"/>
<dbReference type="OMA" id="KEPWMVQ"/>
<dbReference type="OrthoDB" id="427030at2759"/>
<dbReference type="PAN-GO" id="Q8NB42">
    <property type="GO annotations" value="4 GO annotations based on evolutionary models"/>
</dbReference>
<dbReference type="PhylomeDB" id="Q8NB42"/>
<dbReference type="PathwayCommons" id="Q8NB42"/>
<dbReference type="SignaLink" id="Q8NB42"/>
<dbReference type="BioGRID-ORCS" id="84503">
    <property type="hits" value="11 hits in 1169 CRISPR screens"/>
</dbReference>
<dbReference type="ChiTaRS" id="ZNF527">
    <property type="organism name" value="human"/>
</dbReference>
<dbReference type="GenomeRNAi" id="84503"/>
<dbReference type="Pharos" id="Q8NB42">
    <property type="development level" value="Tdark"/>
</dbReference>
<dbReference type="PRO" id="PR:Q8NB42"/>
<dbReference type="Proteomes" id="UP000005640">
    <property type="component" value="Chromosome 19"/>
</dbReference>
<dbReference type="RNAct" id="Q8NB42">
    <property type="molecule type" value="protein"/>
</dbReference>
<dbReference type="Bgee" id="ENSG00000189164">
    <property type="expression patterns" value="Expressed in buccal mucosa cell and 153 other cell types or tissues"/>
</dbReference>
<dbReference type="ExpressionAtlas" id="Q8NB42">
    <property type="expression patterns" value="baseline and differential"/>
</dbReference>
<dbReference type="GO" id="GO:0005634">
    <property type="term" value="C:nucleus"/>
    <property type="evidence" value="ECO:0000318"/>
    <property type="project" value="GO_Central"/>
</dbReference>
<dbReference type="GO" id="GO:0000981">
    <property type="term" value="F:DNA-binding transcription factor activity, RNA polymerase II-specific"/>
    <property type="evidence" value="ECO:0000318"/>
    <property type="project" value="GO_Central"/>
</dbReference>
<dbReference type="GO" id="GO:0000978">
    <property type="term" value="F:RNA polymerase II cis-regulatory region sequence-specific DNA binding"/>
    <property type="evidence" value="ECO:0000318"/>
    <property type="project" value="GO_Central"/>
</dbReference>
<dbReference type="GO" id="GO:0008270">
    <property type="term" value="F:zinc ion binding"/>
    <property type="evidence" value="ECO:0007669"/>
    <property type="project" value="UniProtKB-KW"/>
</dbReference>
<dbReference type="GO" id="GO:0006357">
    <property type="term" value="P:regulation of transcription by RNA polymerase II"/>
    <property type="evidence" value="ECO:0000318"/>
    <property type="project" value="GO_Central"/>
</dbReference>
<dbReference type="CDD" id="cd07765">
    <property type="entry name" value="KRAB_A-box"/>
    <property type="match status" value="1"/>
</dbReference>
<dbReference type="FunFam" id="3.30.160.60:FF:002371">
    <property type="match status" value="1"/>
</dbReference>
<dbReference type="FunFam" id="3.30.160.60:FF:001530">
    <property type="entry name" value="Zinc finger protein 268"/>
    <property type="match status" value="1"/>
</dbReference>
<dbReference type="FunFam" id="3.30.160.60:FF:000101">
    <property type="entry name" value="zinc finger protein 436 isoform X1"/>
    <property type="match status" value="1"/>
</dbReference>
<dbReference type="FunFam" id="3.30.160.60:FF:002090">
    <property type="entry name" value="Zinc finger protein 473"/>
    <property type="match status" value="1"/>
</dbReference>
<dbReference type="FunFam" id="3.30.160.60:FF:003696">
    <property type="entry name" value="Zinc finger protein 527"/>
    <property type="match status" value="1"/>
</dbReference>
<dbReference type="FunFam" id="3.30.160.60:FF:001174">
    <property type="entry name" value="zinc finger protein 527 isoform X1"/>
    <property type="match status" value="1"/>
</dbReference>
<dbReference type="FunFam" id="3.30.160.60:FF:001401">
    <property type="entry name" value="zinc finger protein 527 isoform X1"/>
    <property type="match status" value="1"/>
</dbReference>
<dbReference type="FunFam" id="3.30.160.60:FF:001487">
    <property type="entry name" value="zinc finger protein 527 isoform X1"/>
    <property type="match status" value="1"/>
</dbReference>
<dbReference type="FunFam" id="3.30.160.60:FF:002050">
    <property type="entry name" value="zinc finger protein 527 isoform X1"/>
    <property type="match status" value="1"/>
</dbReference>
<dbReference type="FunFam" id="3.30.160.60:FF:000737">
    <property type="entry name" value="Zinc finger protein 565"/>
    <property type="match status" value="2"/>
</dbReference>
<dbReference type="FunFam" id="3.30.160.60:FF:000099">
    <property type="entry name" value="Zinc finger protein 79"/>
    <property type="match status" value="1"/>
</dbReference>
<dbReference type="Gene3D" id="6.10.140.140">
    <property type="match status" value="1"/>
</dbReference>
<dbReference type="Gene3D" id="3.30.160.60">
    <property type="entry name" value="Classic Zinc Finger"/>
    <property type="match status" value="12"/>
</dbReference>
<dbReference type="InterPro" id="IPR001909">
    <property type="entry name" value="KRAB"/>
</dbReference>
<dbReference type="InterPro" id="IPR036051">
    <property type="entry name" value="KRAB_dom_sf"/>
</dbReference>
<dbReference type="InterPro" id="IPR036236">
    <property type="entry name" value="Znf_C2H2_sf"/>
</dbReference>
<dbReference type="InterPro" id="IPR013087">
    <property type="entry name" value="Znf_C2H2_type"/>
</dbReference>
<dbReference type="PANTHER" id="PTHR23226">
    <property type="entry name" value="ZINC FINGER AND SCAN DOMAIN-CONTAINING"/>
    <property type="match status" value="1"/>
</dbReference>
<dbReference type="PANTHER" id="PTHR23226:SF412">
    <property type="entry name" value="ZINC FINGER PROTEIN 983"/>
    <property type="match status" value="1"/>
</dbReference>
<dbReference type="Pfam" id="PF01352">
    <property type="entry name" value="KRAB"/>
    <property type="match status" value="1"/>
</dbReference>
<dbReference type="Pfam" id="PF00096">
    <property type="entry name" value="zf-C2H2"/>
    <property type="match status" value="9"/>
</dbReference>
<dbReference type="Pfam" id="PF13465">
    <property type="entry name" value="zf-H2C2_2"/>
    <property type="match status" value="1"/>
</dbReference>
<dbReference type="SMART" id="SM00349">
    <property type="entry name" value="KRAB"/>
    <property type="match status" value="1"/>
</dbReference>
<dbReference type="SMART" id="SM00355">
    <property type="entry name" value="ZnF_C2H2"/>
    <property type="match status" value="11"/>
</dbReference>
<dbReference type="SUPFAM" id="SSF57667">
    <property type="entry name" value="beta-beta-alpha zinc fingers"/>
    <property type="match status" value="7"/>
</dbReference>
<dbReference type="SUPFAM" id="SSF109640">
    <property type="entry name" value="KRAB domain (Kruppel-associated box)"/>
    <property type="match status" value="1"/>
</dbReference>
<dbReference type="PROSITE" id="PS50805">
    <property type="entry name" value="KRAB"/>
    <property type="match status" value="1"/>
</dbReference>
<dbReference type="PROSITE" id="PS00028">
    <property type="entry name" value="ZINC_FINGER_C2H2_1"/>
    <property type="match status" value="11"/>
</dbReference>
<dbReference type="PROSITE" id="PS50157">
    <property type="entry name" value="ZINC_FINGER_C2H2_2"/>
    <property type="match status" value="12"/>
</dbReference>
<gene>
    <name type="primary">ZNF527</name>
    <name type="synonym">KIAA1829</name>
</gene>
<accession>Q8NB42</accession>
<accession>B4DVL5</accession>